<feature type="chain" id="PRO_0000248738" description="Proline--tRNA ligase">
    <location>
        <begin position="1"/>
        <end position="600"/>
    </location>
</feature>
<evidence type="ECO:0000255" key="1">
    <source>
        <dbReference type="HAMAP-Rule" id="MF_01569"/>
    </source>
</evidence>
<sequence>MRVTTSFPLGTLRDTPSEAEIISHQLLLKAGYIRRVYSGIYAYMPIMLKVIEKISKIIEIELNSIGCTKLLLPQLHPANLWKKSERWEGYTAGEGIMFNLKDRQGKEFGLAPTHEEVITSIASEIINSYKQLPQCFYQIQTKFRDEIRPRFGLMRSREFIMKDGYSFHSSEKDLASFYEKVGNAYENIFKSCGLETVGVEADSGAIGGASSKEFMVTADAGEDSILFTQSGSYAANIEKAVSIPSQPIPLKNNISGWIETPEQKTILEVCKNNNLDPSQIIKVVVFLAKFEIKSEVPILACIRGDQHINEVKLFNLINKLHSSNLLHLQKIEDIKIIEKNLVNFPLGFIGPDLDNETIKASSNWDKTWTRIIDHSASTLSKFISGANKVNFHKVFQEFSFTSKDYLIEDIRNAKKGDKIKINDNEELKEKKGIEIGHIFQLGQKYSEKLNAKFSDKDGHLKNLWMGCYGIGVTRIAQAAIEQNHDQKGICWPIQISPFEVIIIPTNLKDQIQRDLTEQIYNNFLVNKIDVLLDDREDRAGVKFKDAELIGIPFQIIIGRDSINNEVELICRTNNTKFKISAHKLLETFISESEIMYNKNS</sequence>
<protein>
    <recommendedName>
        <fullName evidence="1">Proline--tRNA ligase</fullName>
        <ecNumber evidence="1">6.1.1.15</ecNumber>
    </recommendedName>
    <alternativeName>
        <fullName evidence="1">Prolyl-tRNA synthetase</fullName>
        <shortName evidence="1">ProRS</shortName>
    </alternativeName>
</protein>
<comment type="function">
    <text evidence="1">Catalyzes the attachment of proline to tRNA(Pro) in a two-step reaction: proline is first activated by ATP to form Pro-AMP and then transferred to the acceptor end of tRNA(Pro). As ProRS can inadvertently accommodate and process non-cognate amino acids such as alanine and cysteine, to avoid such errors it has two additional distinct editing activities against alanine. One activity is designated as 'pretransfer' editing and involves the tRNA(Pro)-independent hydrolysis of activated Ala-AMP. The other activity is designated 'posttransfer' editing and involves deacylation of mischarged Ala-tRNA(Pro). The misacylated Cys-tRNA(Pro) is not edited by ProRS.</text>
</comment>
<comment type="catalytic activity">
    <reaction evidence="1">
        <text>tRNA(Pro) + L-proline + ATP = L-prolyl-tRNA(Pro) + AMP + diphosphate</text>
        <dbReference type="Rhea" id="RHEA:14305"/>
        <dbReference type="Rhea" id="RHEA-COMP:9700"/>
        <dbReference type="Rhea" id="RHEA-COMP:9702"/>
        <dbReference type="ChEBI" id="CHEBI:30616"/>
        <dbReference type="ChEBI" id="CHEBI:33019"/>
        <dbReference type="ChEBI" id="CHEBI:60039"/>
        <dbReference type="ChEBI" id="CHEBI:78442"/>
        <dbReference type="ChEBI" id="CHEBI:78532"/>
        <dbReference type="ChEBI" id="CHEBI:456215"/>
        <dbReference type="EC" id="6.1.1.15"/>
    </reaction>
</comment>
<comment type="subunit">
    <text evidence="1">Homodimer.</text>
</comment>
<comment type="subcellular location">
    <subcellularLocation>
        <location evidence="1">Cytoplasm</location>
    </subcellularLocation>
</comment>
<comment type="domain">
    <text evidence="1">Consists of three domains: the N-terminal catalytic domain, the editing domain and the C-terminal anticodon-binding domain.</text>
</comment>
<comment type="similarity">
    <text evidence="1">Belongs to the class-II aminoacyl-tRNA synthetase family. ProS type 1 subfamily.</text>
</comment>
<keyword id="KW-0030">Aminoacyl-tRNA synthetase</keyword>
<keyword id="KW-0067">ATP-binding</keyword>
<keyword id="KW-0963">Cytoplasm</keyword>
<keyword id="KW-0436">Ligase</keyword>
<keyword id="KW-0547">Nucleotide-binding</keyword>
<keyword id="KW-0648">Protein biosynthesis</keyword>
<proteinExistence type="inferred from homology"/>
<accession>Q31C25</accession>
<dbReference type="EC" id="6.1.1.15" evidence="1"/>
<dbReference type="EMBL" id="CP000111">
    <property type="protein sequence ID" value="ABB49570.1"/>
    <property type="molecule type" value="Genomic_DNA"/>
</dbReference>
<dbReference type="RefSeq" id="WP_011376068.1">
    <property type="nucleotide sequence ID" value="NC_007577.1"/>
</dbReference>
<dbReference type="SMR" id="Q31C25"/>
<dbReference type="STRING" id="74546.PMT9312_0509"/>
<dbReference type="KEGG" id="pmi:PMT9312_0509"/>
<dbReference type="eggNOG" id="COG0442">
    <property type="taxonomic scope" value="Bacteria"/>
</dbReference>
<dbReference type="HOGENOM" id="CLU_016739_0_0_3"/>
<dbReference type="OrthoDB" id="9809052at2"/>
<dbReference type="Proteomes" id="UP000002715">
    <property type="component" value="Chromosome"/>
</dbReference>
<dbReference type="GO" id="GO:0005829">
    <property type="term" value="C:cytosol"/>
    <property type="evidence" value="ECO:0007669"/>
    <property type="project" value="TreeGrafter"/>
</dbReference>
<dbReference type="GO" id="GO:0002161">
    <property type="term" value="F:aminoacyl-tRNA deacylase activity"/>
    <property type="evidence" value="ECO:0007669"/>
    <property type="project" value="InterPro"/>
</dbReference>
<dbReference type="GO" id="GO:0005524">
    <property type="term" value="F:ATP binding"/>
    <property type="evidence" value="ECO:0007669"/>
    <property type="project" value="UniProtKB-UniRule"/>
</dbReference>
<dbReference type="GO" id="GO:0004827">
    <property type="term" value="F:proline-tRNA ligase activity"/>
    <property type="evidence" value="ECO:0007669"/>
    <property type="project" value="UniProtKB-UniRule"/>
</dbReference>
<dbReference type="GO" id="GO:0006433">
    <property type="term" value="P:prolyl-tRNA aminoacylation"/>
    <property type="evidence" value="ECO:0007669"/>
    <property type="project" value="UniProtKB-UniRule"/>
</dbReference>
<dbReference type="CDD" id="cd04334">
    <property type="entry name" value="ProRS-INS"/>
    <property type="match status" value="1"/>
</dbReference>
<dbReference type="CDD" id="cd00861">
    <property type="entry name" value="ProRS_anticodon_short"/>
    <property type="match status" value="1"/>
</dbReference>
<dbReference type="Gene3D" id="3.40.50.800">
    <property type="entry name" value="Anticodon-binding domain"/>
    <property type="match status" value="1"/>
</dbReference>
<dbReference type="Gene3D" id="3.30.930.10">
    <property type="entry name" value="Bira Bifunctional Protein, Domain 2"/>
    <property type="match status" value="2"/>
</dbReference>
<dbReference type="HAMAP" id="MF_01569">
    <property type="entry name" value="Pro_tRNA_synth_type1"/>
    <property type="match status" value="1"/>
</dbReference>
<dbReference type="InterPro" id="IPR002314">
    <property type="entry name" value="aa-tRNA-synt_IIb"/>
</dbReference>
<dbReference type="InterPro" id="IPR006195">
    <property type="entry name" value="aa-tRNA-synth_II"/>
</dbReference>
<dbReference type="InterPro" id="IPR045864">
    <property type="entry name" value="aa-tRNA-synth_II/BPL/LPL"/>
</dbReference>
<dbReference type="InterPro" id="IPR004154">
    <property type="entry name" value="Anticodon-bd"/>
</dbReference>
<dbReference type="InterPro" id="IPR036621">
    <property type="entry name" value="Anticodon-bd_dom_sf"/>
</dbReference>
<dbReference type="InterPro" id="IPR002316">
    <property type="entry name" value="Pro-tRNA-ligase_IIa"/>
</dbReference>
<dbReference type="InterPro" id="IPR004500">
    <property type="entry name" value="Pro-tRNA-synth_IIa_bac-type"/>
</dbReference>
<dbReference type="InterPro" id="IPR023717">
    <property type="entry name" value="Pro-tRNA-Synthase_IIa_type1"/>
</dbReference>
<dbReference type="InterPro" id="IPR050062">
    <property type="entry name" value="Pro-tRNA_synthetase"/>
</dbReference>
<dbReference type="InterPro" id="IPR044140">
    <property type="entry name" value="ProRS_anticodon_short"/>
</dbReference>
<dbReference type="InterPro" id="IPR036754">
    <property type="entry name" value="YbaK/aa-tRNA-synt-asso_dom_sf"/>
</dbReference>
<dbReference type="InterPro" id="IPR007214">
    <property type="entry name" value="YbaK/aa-tRNA-synth-assoc-dom"/>
</dbReference>
<dbReference type="NCBIfam" id="NF006625">
    <property type="entry name" value="PRK09194.1"/>
    <property type="match status" value="1"/>
</dbReference>
<dbReference type="NCBIfam" id="TIGR00409">
    <property type="entry name" value="proS_fam_II"/>
    <property type="match status" value="1"/>
</dbReference>
<dbReference type="PANTHER" id="PTHR42753">
    <property type="entry name" value="MITOCHONDRIAL RIBOSOME PROTEIN L39/PROLYL-TRNA LIGASE FAMILY MEMBER"/>
    <property type="match status" value="1"/>
</dbReference>
<dbReference type="PANTHER" id="PTHR42753:SF2">
    <property type="entry name" value="PROLINE--TRNA LIGASE"/>
    <property type="match status" value="1"/>
</dbReference>
<dbReference type="Pfam" id="PF03129">
    <property type="entry name" value="HGTP_anticodon"/>
    <property type="match status" value="1"/>
</dbReference>
<dbReference type="Pfam" id="PF00587">
    <property type="entry name" value="tRNA-synt_2b"/>
    <property type="match status" value="1"/>
</dbReference>
<dbReference type="Pfam" id="PF04073">
    <property type="entry name" value="tRNA_edit"/>
    <property type="match status" value="1"/>
</dbReference>
<dbReference type="PRINTS" id="PR01046">
    <property type="entry name" value="TRNASYNTHPRO"/>
</dbReference>
<dbReference type="SUPFAM" id="SSF52954">
    <property type="entry name" value="Class II aaRS ABD-related"/>
    <property type="match status" value="1"/>
</dbReference>
<dbReference type="SUPFAM" id="SSF55681">
    <property type="entry name" value="Class II aaRS and biotin synthetases"/>
    <property type="match status" value="1"/>
</dbReference>
<dbReference type="SUPFAM" id="SSF55826">
    <property type="entry name" value="YbaK/ProRS associated domain"/>
    <property type="match status" value="1"/>
</dbReference>
<dbReference type="PROSITE" id="PS50862">
    <property type="entry name" value="AA_TRNA_LIGASE_II"/>
    <property type="match status" value="1"/>
</dbReference>
<organism>
    <name type="scientific">Prochlorococcus marinus (strain MIT 9312)</name>
    <dbReference type="NCBI Taxonomy" id="74546"/>
    <lineage>
        <taxon>Bacteria</taxon>
        <taxon>Bacillati</taxon>
        <taxon>Cyanobacteriota</taxon>
        <taxon>Cyanophyceae</taxon>
        <taxon>Synechococcales</taxon>
        <taxon>Prochlorococcaceae</taxon>
        <taxon>Prochlorococcus</taxon>
    </lineage>
</organism>
<name>SYP_PROM9</name>
<reference key="1">
    <citation type="journal article" date="2006" name="Science">
        <title>Genomic islands and the ecology and evolution of Prochlorococcus.</title>
        <authorList>
            <person name="Coleman M.L."/>
            <person name="Sullivan M.B."/>
            <person name="Martiny A.C."/>
            <person name="Steglich C."/>
            <person name="Barry K."/>
            <person name="Delong E.F."/>
            <person name="Chisholm S.W."/>
        </authorList>
    </citation>
    <scope>NUCLEOTIDE SEQUENCE [LARGE SCALE GENOMIC DNA]</scope>
    <source>
        <strain>MIT 9312</strain>
    </source>
</reference>
<gene>
    <name evidence="1" type="primary">proS</name>
    <name type="ordered locus">PMT9312_0509</name>
</gene>